<comment type="function">
    <text evidence="1">One of the primary rRNA binding proteins, it binds directly to 16S rRNA where it nucleates assembly of the head domain of the 30S subunit. Is located at the subunit interface close to the decoding center, probably blocks exit of the E-site tRNA.</text>
</comment>
<comment type="subunit">
    <text evidence="1">Part of the 30S ribosomal subunit. Contacts proteins S9 and S11.</text>
</comment>
<comment type="similarity">
    <text evidence="1">Belongs to the universal ribosomal protein uS7 family.</text>
</comment>
<feature type="chain" id="PRO_1000014300" description="Small ribosomal subunit protein uS7">
    <location>
        <begin position="1"/>
        <end position="156"/>
    </location>
</feature>
<dbReference type="EMBL" id="CP000259">
    <property type="protein sequence ID" value="ABF31421.1"/>
    <property type="molecule type" value="Genomic_DNA"/>
</dbReference>
<dbReference type="RefSeq" id="WP_002986047.1">
    <property type="nucleotide sequence ID" value="NC_008021.1"/>
</dbReference>
<dbReference type="SMR" id="Q1JNH8"/>
<dbReference type="GeneID" id="69900198"/>
<dbReference type="KEGG" id="spk:MGAS9429_Spy0233"/>
<dbReference type="HOGENOM" id="CLU_072226_1_1_9"/>
<dbReference type="Proteomes" id="UP000002433">
    <property type="component" value="Chromosome"/>
</dbReference>
<dbReference type="GO" id="GO:0015935">
    <property type="term" value="C:small ribosomal subunit"/>
    <property type="evidence" value="ECO:0007669"/>
    <property type="project" value="InterPro"/>
</dbReference>
<dbReference type="GO" id="GO:0019843">
    <property type="term" value="F:rRNA binding"/>
    <property type="evidence" value="ECO:0007669"/>
    <property type="project" value="UniProtKB-UniRule"/>
</dbReference>
<dbReference type="GO" id="GO:0003735">
    <property type="term" value="F:structural constituent of ribosome"/>
    <property type="evidence" value="ECO:0007669"/>
    <property type="project" value="InterPro"/>
</dbReference>
<dbReference type="GO" id="GO:0000049">
    <property type="term" value="F:tRNA binding"/>
    <property type="evidence" value="ECO:0007669"/>
    <property type="project" value="UniProtKB-UniRule"/>
</dbReference>
<dbReference type="GO" id="GO:0006412">
    <property type="term" value="P:translation"/>
    <property type="evidence" value="ECO:0007669"/>
    <property type="project" value="UniProtKB-UniRule"/>
</dbReference>
<dbReference type="CDD" id="cd14869">
    <property type="entry name" value="uS7_Bacteria"/>
    <property type="match status" value="1"/>
</dbReference>
<dbReference type="FunFam" id="1.10.455.10:FF:000001">
    <property type="entry name" value="30S ribosomal protein S7"/>
    <property type="match status" value="1"/>
</dbReference>
<dbReference type="Gene3D" id="1.10.455.10">
    <property type="entry name" value="Ribosomal protein S7 domain"/>
    <property type="match status" value="1"/>
</dbReference>
<dbReference type="HAMAP" id="MF_00480_B">
    <property type="entry name" value="Ribosomal_uS7_B"/>
    <property type="match status" value="1"/>
</dbReference>
<dbReference type="InterPro" id="IPR000235">
    <property type="entry name" value="Ribosomal_uS7"/>
</dbReference>
<dbReference type="InterPro" id="IPR005717">
    <property type="entry name" value="Ribosomal_uS7_bac/org-type"/>
</dbReference>
<dbReference type="InterPro" id="IPR020606">
    <property type="entry name" value="Ribosomal_uS7_CS"/>
</dbReference>
<dbReference type="InterPro" id="IPR023798">
    <property type="entry name" value="Ribosomal_uS7_dom"/>
</dbReference>
<dbReference type="InterPro" id="IPR036823">
    <property type="entry name" value="Ribosomal_uS7_dom_sf"/>
</dbReference>
<dbReference type="NCBIfam" id="TIGR01029">
    <property type="entry name" value="rpsG_bact"/>
    <property type="match status" value="1"/>
</dbReference>
<dbReference type="PANTHER" id="PTHR11205">
    <property type="entry name" value="RIBOSOMAL PROTEIN S7"/>
    <property type="match status" value="1"/>
</dbReference>
<dbReference type="Pfam" id="PF00177">
    <property type="entry name" value="Ribosomal_S7"/>
    <property type="match status" value="1"/>
</dbReference>
<dbReference type="PIRSF" id="PIRSF002122">
    <property type="entry name" value="RPS7p_RPS7a_RPS5e_RPS7o"/>
    <property type="match status" value="1"/>
</dbReference>
<dbReference type="SUPFAM" id="SSF47973">
    <property type="entry name" value="Ribosomal protein S7"/>
    <property type="match status" value="1"/>
</dbReference>
<dbReference type="PROSITE" id="PS00052">
    <property type="entry name" value="RIBOSOMAL_S7"/>
    <property type="match status" value="1"/>
</dbReference>
<reference key="1">
    <citation type="journal article" date="2006" name="Proc. Natl. Acad. Sci. U.S.A.">
        <title>Molecular genetic anatomy of inter- and intraserotype variation in the human bacterial pathogen group A Streptococcus.</title>
        <authorList>
            <person name="Beres S.B."/>
            <person name="Richter E.W."/>
            <person name="Nagiec M.J."/>
            <person name="Sumby P."/>
            <person name="Porcella S.F."/>
            <person name="DeLeo F.R."/>
            <person name="Musser J.M."/>
        </authorList>
    </citation>
    <scope>NUCLEOTIDE SEQUENCE [LARGE SCALE GENOMIC DNA]</scope>
    <source>
        <strain>MGAS9429</strain>
    </source>
</reference>
<sequence length="156" mass="17652">MSRKNQAPKREVLPDPLYNSKIVTRLINRVMLDGKRGTAATIVYDAFSAIKEATGNDALEVFETAMDNIMPVLEVRARRVGGSNYQVPVEVRPERRTTLGLRWLVNASRARGEHTMKDRLAKEIMDAANNTGASVKKREDTHKMAEANRAFAHFRW</sequence>
<organism>
    <name type="scientific">Streptococcus pyogenes serotype M12 (strain MGAS9429)</name>
    <dbReference type="NCBI Taxonomy" id="370551"/>
    <lineage>
        <taxon>Bacteria</taxon>
        <taxon>Bacillati</taxon>
        <taxon>Bacillota</taxon>
        <taxon>Bacilli</taxon>
        <taxon>Lactobacillales</taxon>
        <taxon>Streptococcaceae</taxon>
        <taxon>Streptococcus</taxon>
    </lineage>
</organism>
<name>RS7_STRPC</name>
<protein>
    <recommendedName>
        <fullName evidence="1">Small ribosomal subunit protein uS7</fullName>
    </recommendedName>
    <alternativeName>
        <fullName evidence="2">30S ribosomal protein S7</fullName>
    </alternativeName>
</protein>
<proteinExistence type="inferred from homology"/>
<evidence type="ECO:0000255" key="1">
    <source>
        <dbReference type="HAMAP-Rule" id="MF_00480"/>
    </source>
</evidence>
<evidence type="ECO:0000305" key="2"/>
<keyword id="KW-0687">Ribonucleoprotein</keyword>
<keyword id="KW-0689">Ribosomal protein</keyword>
<keyword id="KW-0694">RNA-binding</keyword>
<keyword id="KW-0699">rRNA-binding</keyword>
<keyword id="KW-0820">tRNA-binding</keyword>
<gene>
    <name evidence="1" type="primary">rpsG</name>
    <name type="ordered locus">MGAS9429_Spy0233</name>
</gene>
<accession>Q1JNH8</accession>